<protein>
    <recommendedName>
        <fullName evidence="1">Fatty acid oxidation complex subunit alpha</fullName>
    </recommendedName>
    <domain>
        <recommendedName>
            <fullName evidence="1">Enoyl-CoA hydratase/Delta(3)-cis-Delta(2)-trans-enoyl-CoA isomerase/3-hydroxybutyryl-CoA epimerase</fullName>
            <ecNumber evidence="1">4.2.1.17</ecNumber>
            <ecNumber evidence="1">5.1.2.3</ecNumber>
            <ecNumber evidence="1">5.3.3.8</ecNumber>
        </recommendedName>
    </domain>
    <domain>
        <recommendedName>
            <fullName evidence="1">3-hydroxyacyl-CoA dehydrogenase</fullName>
            <ecNumber evidence="1">1.1.1.35</ecNumber>
        </recommendedName>
    </domain>
</protein>
<organism>
    <name type="scientific">Shewanella frigidimarina (strain NCIMB 400)</name>
    <dbReference type="NCBI Taxonomy" id="318167"/>
    <lineage>
        <taxon>Bacteria</taxon>
        <taxon>Pseudomonadati</taxon>
        <taxon>Pseudomonadota</taxon>
        <taxon>Gammaproteobacteria</taxon>
        <taxon>Alteromonadales</taxon>
        <taxon>Shewanellaceae</taxon>
        <taxon>Shewanella</taxon>
    </lineage>
</organism>
<sequence>MIYQSPTIQVELLEDNIAKLCFNAQGSVNKFDRETIASLDAALDSIKQNTNIKALLLTSAKSTFIVGADITEFLTLFQQDDATLLAWVEQANAVFNKLEDLPFPTASAINGFALGGGCETILATDLRVADTNARIGLPETKLGLIPGFGGTVRLPRVIGADNALEWITTAKDQRPEDALKVGAIDAVVAPENLEAAAIQMLHDALNGSLDWQARRTKKQSPLQLPKLEAMMSFATAKGMVFSVAGKHYPAPMAAVNVVEQAAGLDRDGALKVEALAFIKLAKTDVAQALIGIFLNDQFVKGKAKKAGKLAKDVNQAAVLGAGIMGGGIAYQSASKGTPIVMKDIAQPALELGLNEAAKILTTQVARGRSTPEKMAKVLNNITPSLDYAAIKNSDIVVEAVVEHPKVKATVLAEVEGYVSEDAIIASNTSTISINLLAKSLKKPERFCGMHFFNPVHKMPLVEIIRGEHSSEETIATVVAYASKMGKTPIVVNDCPGFFVNRVLFPYFAGFSGLLAEGADFAAVDKVMEKQFGWPMGPAYLLDVVGLDTGHHAQAVMAEGFPDRMGKNGKDAIDIMFENKRLGQKNTKGFYAYSVDRRGKPKKDIDPTSYELLSAEFGELKAFESDDIIARCMIPMIIETVRCLEEGIIASPAEGDMGLVYGIGFPPFRGGVFRYLDTMGVANFVALADKYAHLGGLYQVTDAMRALAANNGSYYQA</sequence>
<feature type="chain" id="PRO_1000069575" description="Fatty acid oxidation complex subunit alpha">
    <location>
        <begin position="1"/>
        <end position="716"/>
    </location>
</feature>
<feature type="region of interest" description="Enoyl-CoA hydratase/isomerase" evidence="1">
    <location>
        <begin position="1"/>
        <end position="189"/>
    </location>
</feature>
<feature type="region of interest" description="3-hydroxyacyl-CoA dehydrogenase" evidence="1">
    <location>
        <begin position="311"/>
        <end position="716"/>
    </location>
</feature>
<feature type="active site" description="For 3-hydroxyacyl-CoA dehydrogenase activity" evidence="1">
    <location>
        <position position="450"/>
    </location>
</feature>
<feature type="binding site" evidence="1">
    <location>
        <position position="296"/>
    </location>
    <ligand>
        <name>substrate</name>
    </ligand>
</feature>
<feature type="binding site" evidence="1">
    <location>
        <position position="324"/>
    </location>
    <ligand>
        <name>NAD(+)</name>
        <dbReference type="ChEBI" id="CHEBI:57540"/>
    </ligand>
</feature>
<feature type="binding site" evidence="1">
    <location>
        <position position="343"/>
    </location>
    <ligand>
        <name>NAD(+)</name>
        <dbReference type="ChEBI" id="CHEBI:57540"/>
    </ligand>
</feature>
<feature type="binding site" evidence="1">
    <location>
        <begin position="400"/>
        <end position="402"/>
    </location>
    <ligand>
        <name>NAD(+)</name>
        <dbReference type="ChEBI" id="CHEBI:57540"/>
    </ligand>
</feature>
<feature type="binding site" evidence="1">
    <location>
        <position position="407"/>
    </location>
    <ligand>
        <name>NAD(+)</name>
        <dbReference type="ChEBI" id="CHEBI:57540"/>
    </ligand>
</feature>
<feature type="binding site" evidence="1">
    <location>
        <position position="429"/>
    </location>
    <ligand>
        <name>NAD(+)</name>
        <dbReference type="ChEBI" id="CHEBI:57540"/>
    </ligand>
</feature>
<feature type="binding site" evidence="1">
    <location>
        <position position="453"/>
    </location>
    <ligand>
        <name>NAD(+)</name>
        <dbReference type="ChEBI" id="CHEBI:57540"/>
    </ligand>
</feature>
<feature type="binding site" evidence="1">
    <location>
        <position position="500"/>
    </location>
    <ligand>
        <name>substrate</name>
    </ligand>
</feature>
<feature type="binding site" evidence="1">
    <location>
        <position position="660"/>
    </location>
    <ligand>
        <name>substrate</name>
    </ligand>
</feature>
<feature type="site" description="Important for catalytic activity" evidence="1">
    <location>
        <position position="119"/>
    </location>
</feature>
<feature type="site" description="Important for catalytic activity" evidence="1">
    <location>
        <position position="139"/>
    </location>
</feature>
<keyword id="KW-0276">Fatty acid metabolism</keyword>
<keyword id="KW-0413">Isomerase</keyword>
<keyword id="KW-0442">Lipid degradation</keyword>
<keyword id="KW-0443">Lipid metabolism</keyword>
<keyword id="KW-0456">Lyase</keyword>
<keyword id="KW-0511">Multifunctional enzyme</keyword>
<keyword id="KW-0520">NAD</keyword>
<keyword id="KW-0560">Oxidoreductase</keyword>
<keyword id="KW-1185">Reference proteome</keyword>
<evidence type="ECO:0000255" key="1">
    <source>
        <dbReference type="HAMAP-Rule" id="MF_01621"/>
    </source>
</evidence>
<name>FADB_SHEFN</name>
<accession>Q08A39</accession>
<reference key="1">
    <citation type="submission" date="2006-08" db="EMBL/GenBank/DDBJ databases">
        <title>Complete sequence of Shewanella frigidimarina NCIMB 400.</title>
        <authorList>
            <consortium name="US DOE Joint Genome Institute"/>
            <person name="Copeland A."/>
            <person name="Lucas S."/>
            <person name="Lapidus A."/>
            <person name="Barry K."/>
            <person name="Detter J.C."/>
            <person name="Glavina del Rio T."/>
            <person name="Hammon N."/>
            <person name="Israni S."/>
            <person name="Dalin E."/>
            <person name="Tice H."/>
            <person name="Pitluck S."/>
            <person name="Fredrickson J.K."/>
            <person name="Kolker E."/>
            <person name="McCuel L.A."/>
            <person name="DiChristina T."/>
            <person name="Nealson K.H."/>
            <person name="Newman D."/>
            <person name="Tiedje J.M."/>
            <person name="Zhou J."/>
            <person name="Romine M.F."/>
            <person name="Culley D.E."/>
            <person name="Serres M."/>
            <person name="Chertkov O."/>
            <person name="Brettin T."/>
            <person name="Bruce D."/>
            <person name="Han C."/>
            <person name="Tapia R."/>
            <person name="Gilna P."/>
            <person name="Schmutz J."/>
            <person name="Larimer F."/>
            <person name="Land M."/>
            <person name="Hauser L."/>
            <person name="Kyrpides N."/>
            <person name="Mikhailova N."/>
            <person name="Richardson P."/>
        </authorList>
    </citation>
    <scope>NUCLEOTIDE SEQUENCE [LARGE SCALE GENOMIC DNA]</scope>
    <source>
        <strain>NCIMB 400</strain>
    </source>
</reference>
<gene>
    <name evidence="1" type="primary">fadB</name>
    <name type="ordered locus">Sfri_0013</name>
</gene>
<comment type="function">
    <text evidence="1">Involved in the aerobic and anaerobic degradation of long-chain fatty acids via beta-oxidation cycle. Catalyzes the formation of 3-oxoacyl-CoA from enoyl-CoA via L-3-hydroxyacyl-CoA. It can also use D-3-hydroxyacyl-CoA and cis-3-enoyl-CoA as substrate.</text>
</comment>
<comment type="catalytic activity">
    <reaction evidence="1">
        <text>a (3S)-3-hydroxyacyl-CoA + NAD(+) = a 3-oxoacyl-CoA + NADH + H(+)</text>
        <dbReference type="Rhea" id="RHEA:22432"/>
        <dbReference type="ChEBI" id="CHEBI:15378"/>
        <dbReference type="ChEBI" id="CHEBI:57318"/>
        <dbReference type="ChEBI" id="CHEBI:57540"/>
        <dbReference type="ChEBI" id="CHEBI:57945"/>
        <dbReference type="ChEBI" id="CHEBI:90726"/>
        <dbReference type="EC" id="1.1.1.35"/>
    </reaction>
</comment>
<comment type="catalytic activity">
    <reaction evidence="1">
        <text>a (3S)-3-hydroxyacyl-CoA = a (2E)-enoyl-CoA + H2O</text>
        <dbReference type="Rhea" id="RHEA:16105"/>
        <dbReference type="ChEBI" id="CHEBI:15377"/>
        <dbReference type="ChEBI" id="CHEBI:57318"/>
        <dbReference type="ChEBI" id="CHEBI:58856"/>
        <dbReference type="EC" id="4.2.1.17"/>
    </reaction>
</comment>
<comment type="catalytic activity">
    <reaction evidence="1">
        <text>a 4-saturated-(3S)-3-hydroxyacyl-CoA = a (3E)-enoyl-CoA + H2O</text>
        <dbReference type="Rhea" id="RHEA:20724"/>
        <dbReference type="ChEBI" id="CHEBI:15377"/>
        <dbReference type="ChEBI" id="CHEBI:58521"/>
        <dbReference type="ChEBI" id="CHEBI:137480"/>
        <dbReference type="EC" id="4.2.1.17"/>
    </reaction>
</comment>
<comment type="catalytic activity">
    <reaction evidence="1">
        <text>(3S)-3-hydroxybutanoyl-CoA = (3R)-3-hydroxybutanoyl-CoA</text>
        <dbReference type="Rhea" id="RHEA:21760"/>
        <dbReference type="ChEBI" id="CHEBI:57315"/>
        <dbReference type="ChEBI" id="CHEBI:57316"/>
        <dbReference type="EC" id="5.1.2.3"/>
    </reaction>
</comment>
<comment type="catalytic activity">
    <reaction evidence="1">
        <text>a (3Z)-enoyl-CoA = a 4-saturated (2E)-enoyl-CoA</text>
        <dbReference type="Rhea" id="RHEA:45900"/>
        <dbReference type="ChEBI" id="CHEBI:85097"/>
        <dbReference type="ChEBI" id="CHEBI:85489"/>
        <dbReference type="EC" id="5.3.3.8"/>
    </reaction>
</comment>
<comment type="catalytic activity">
    <reaction evidence="1">
        <text>a (3E)-enoyl-CoA = a 4-saturated (2E)-enoyl-CoA</text>
        <dbReference type="Rhea" id="RHEA:45228"/>
        <dbReference type="ChEBI" id="CHEBI:58521"/>
        <dbReference type="ChEBI" id="CHEBI:85097"/>
        <dbReference type="EC" id="5.3.3.8"/>
    </reaction>
</comment>
<comment type="pathway">
    <text evidence="1">Lipid metabolism; fatty acid beta-oxidation.</text>
</comment>
<comment type="subunit">
    <text evidence="1">Heterotetramer of two alpha chains (FadB) and two beta chains (FadA).</text>
</comment>
<comment type="similarity">
    <text evidence="1">In the N-terminal section; belongs to the enoyl-CoA hydratase/isomerase family.</text>
</comment>
<comment type="similarity">
    <text evidence="1">In the C-terminal section; belongs to the 3-hydroxyacyl-CoA dehydrogenase family.</text>
</comment>
<proteinExistence type="inferred from homology"/>
<dbReference type="EC" id="4.2.1.17" evidence="1"/>
<dbReference type="EC" id="5.1.2.3" evidence="1"/>
<dbReference type="EC" id="5.3.3.8" evidence="1"/>
<dbReference type="EC" id="1.1.1.35" evidence="1"/>
<dbReference type="EMBL" id="CP000447">
    <property type="protein sequence ID" value="ABI69876.1"/>
    <property type="molecule type" value="Genomic_DNA"/>
</dbReference>
<dbReference type="RefSeq" id="WP_011635505.1">
    <property type="nucleotide sequence ID" value="NC_008345.1"/>
</dbReference>
<dbReference type="SMR" id="Q08A39"/>
<dbReference type="STRING" id="318167.Sfri_0013"/>
<dbReference type="KEGG" id="sfr:Sfri_0013"/>
<dbReference type="eggNOG" id="COG1024">
    <property type="taxonomic scope" value="Bacteria"/>
</dbReference>
<dbReference type="eggNOG" id="COG1250">
    <property type="taxonomic scope" value="Bacteria"/>
</dbReference>
<dbReference type="HOGENOM" id="CLU_009834_16_3_6"/>
<dbReference type="OrthoDB" id="5389341at2"/>
<dbReference type="UniPathway" id="UPA00659"/>
<dbReference type="Proteomes" id="UP000000684">
    <property type="component" value="Chromosome"/>
</dbReference>
<dbReference type="GO" id="GO:0036125">
    <property type="term" value="C:fatty acid beta-oxidation multienzyme complex"/>
    <property type="evidence" value="ECO:0007669"/>
    <property type="project" value="InterPro"/>
</dbReference>
<dbReference type="GO" id="GO:0008692">
    <property type="term" value="F:3-hydroxybutyryl-CoA epimerase activity"/>
    <property type="evidence" value="ECO:0007669"/>
    <property type="project" value="UniProtKB-UniRule"/>
</dbReference>
<dbReference type="GO" id="GO:0004165">
    <property type="term" value="F:delta(3)-delta(2)-enoyl-CoA isomerase activity"/>
    <property type="evidence" value="ECO:0007669"/>
    <property type="project" value="UniProtKB-UniRule"/>
</dbReference>
<dbReference type="GO" id="GO:0004300">
    <property type="term" value="F:enoyl-CoA hydratase activity"/>
    <property type="evidence" value="ECO:0007669"/>
    <property type="project" value="UniProtKB-UniRule"/>
</dbReference>
<dbReference type="GO" id="GO:0016509">
    <property type="term" value="F:long-chain-3-hydroxyacyl-CoA dehydrogenase activity"/>
    <property type="evidence" value="ECO:0007669"/>
    <property type="project" value="TreeGrafter"/>
</dbReference>
<dbReference type="GO" id="GO:0070403">
    <property type="term" value="F:NAD+ binding"/>
    <property type="evidence" value="ECO:0007669"/>
    <property type="project" value="InterPro"/>
</dbReference>
<dbReference type="GO" id="GO:0006635">
    <property type="term" value="P:fatty acid beta-oxidation"/>
    <property type="evidence" value="ECO:0007669"/>
    <property type="project" value="UniProtKB-UniRule"/>
</dbReference>
<dbReference type="CDD" id="cd06558">
    <property type="entry name" value="crotonase-like"/>
    <property type="match status" value="1"/>
</dbReference>
<dbReference type="FunFam" id="1.10.1040.50:FF:000001">
    <property type="entry name" value="Fatty acid oxidation complex subunit alpha"/>
    <property type="match status" value="1"/>
</dbReference>
<dbReference type="FunFam" id="3.40.50.720:FF:000009">
    <property type="entry name" value="Fatty oxidation complex, alpha subunit"/>
    <property type="match status" value="1"/>
</dbReference>
<dbReference type="Gene3D" id="1.10.1040.50">
    <property type="match status" value="1"/>
</dbReference>
<dbReference type="Gene3D" id="3.90.226.10">
    <property type="entry name" value="2-enoyl-CoA Hydratase, Chain A, domain 1"/>
    <property type="match status" value="1"/>
</dbReference>
<dbReference type="Gene3D" id="3.40.50.720">
    <property type="entry name" value="NAD(P)-binding Rossmann-like Domain"/>
    <property type="match status" value="1"/>
</dbReference>
<dbReference type="HAMAP" id="MF_01621">
    <property type="entry name" value="FadB"/>
    <property type="match status" value="1"/>
</dbReference>
<dbReference type="InterPro" id="IPR006180">
    <property type="entry name" value="3-OHacyl-CoA_DH_CS"/>
</dbReference>
<dbReference type="InterPro" id="IPR006176">
    <property type="entry name" value="3-OHacyl-CoA_DH_NAD-bd"/>
</dbReference>
<dbReference type="InterPro" id="IPR006108">
    <property type="entry name" value="3HC_DH_C"/>
</dbReference>
<dbReference type="InterPro" id="IPR008927">
    <property type="entry name" value="6-PGluconate_DH-like_C_sf"/>
</dbReference>
<dbReference type="InterPro" id="IPR029045">
    <property type="entry name" value="ClpP/crotonase-like_dom_sf"/>
</dbReference>
<dbReference type="InterPro" id="IPR001753">
    <property type="entry name" value="Enoyl-CoA_hydra/iso"/>
</dbReference>
<dbReference type="InterPro" id="IPR050136">
    <property type="entry name" value="FA_oxidation_alpha_subunit"/>
</dbReference>
<dbReference type="InterPro" id="IPR012799">
    <property type="entry name" value="FadB"/>
</dbReference>
<dbReference type="InterPro" id="IPR036291">
    <property type="entry name" value="NAD(P)-bd_dom_sf"/>
</dbReference>
<dbReference type="NCBIfam" id="TIGR02437">
    <property type="entry name" value="FadB"/>
    <property type="match status" value="1"/>
</dbReference>
<dbReference type="NCBIfam" id="NF008727">
    <property type="entry name" value="PRK11730.1"/>
    <property type="match status" value="1"/>
</dbReference>
<dbReference type="PANTHER" id="PTHR43612">
    <property type="entry name" value="TRIFUNCTIONAL ENZYME SUBUNIT ALPHA"/>
    <property type="match status" value="1"/>
</dbReference>
<dbReference type="PANTHER" id="PTHR43612:SF3">
    <property type="entry name" value="TRIFUNCTIONAL ENZYME SUBUNIT ALPHA, MITOCHONDRIAL"/>
    <property type="match status" value="1"/>
</dbReference>
<dbReference type="Pfam" id="PF00725">
    <property type="entry name" value="3HCDH"/>
    <property type="match status" value="1"/>
</dbReference>
<dbReference type="Pfam" id="PF02737">
    <property type="entry name" value="3HCDH_N"/>
    <property type="match status" value="1"/>
</dbReference>
<dbReference type="Pfam" id="PF00378">
    <property type="entry name" value="ECH_1"/>
    <property type="match status" value="1"/>
</dbReference>
<dbReference type="SUPFAM" id="SSF48179">
    <property type="entry name" value="6-phosphogluconate dehydrogenase C-terminal domain-like"/>
    <property type="match status" value="2"/>
</dbReference>
<dbReference type="SUPFAM" id="SSF52096">
    <property type="entry name" value="ClpP/crotonase"/>
    <property type="match status" value="1"/>
</dbReference>
<dbReference type="SUPFAM" id="SSF51735">
    <property type="entry name" value="NAD(P)-binding Rossmann-fold domains"/>
    <property type="match status" value="1"/>
</dbReference>
<dbReference type="PROSITE" id="PS00067">
    <property type="entry name" value="3HCDH"/>
    <property type="match status" value="1"/>
</dbReference>